<sequence length="318" mass="37360">MLEVEKKIKQKLGIDETEVLSSLTSYRKKGKTYYKIVTYDSKTKQSRRYHVPRMFEEEILALWKQRQKYIEEERELEREVKSLLKKYGDAEKIKEILEKVAGESFDKAVSSYAIKTYTNKAKELFKSFKEDLIKLYREGVLKRLSVLQVLYLLANLKEISEDTERGSYFFKKGLNTIIKVAKNERIPNPFGTLKNDFFLSGKQTPYDFLLSNFLEELIGETLGELLEKEIEKLVAEEKAKEIEGKVKKLKEIVSWFETLPYEIKQIAKEVISDNVLDIAEKFYKDMKECNYSLDEAKAFLTSSPRDNLVNYMQYLKSI</sequence>
<feature type="chain" id="PRO_0000187002" description="Uncharacterized protein aq_aa34">
    <location>
        <begin position="1"/>
        <end position="318"/>
    </location>
</feature>
<protein>
    <recommendedName>
        <fullName>Uncharacterized protein aq_aa34</fullName>
    </recommendedName>
</protein>
<reference key="1">
    <citation type="journal article" date="1998" name="Nature">
        <title>The complete genome of the hyperthermophilic bacterium Aquifex aeolicus.</title>
        <authorList>
            <person name="Deckert G."/>
            <person name="Warren P.V."/>
            <person name="Gaasterland T."/>
            <person name="Young W.G."/>
            <person name="Lenox A.L."/>
            <person name="Graham D.E."/>
            <person name="Overbeek R."/>
            <person name="Snead M.A."/>
            <person name="Keller M."/>
            <person name="Aujay M."/>
            <person name="Huber R."/>
            <person name="Feldman R.A."/>
            <person name="Short J.M."/>
            <person name="Olsen G.J."/>
            <person name="Swanson R.V."/>
        </authorList>
    </citation>
    <scope>NUCLEOTIDE SEQUENCE [LARGE SCALE GENOMIC DNA]</scope>
    <source>
        <strain>VF5</strain>
    </source>
</reference>
<dbReference type="EMBL" id="AE000667">
    <property type="protein sequence ID" value="AAC07975.1"/>
    <property type="molecule type" value="Genomic_DNA"/>
</dbReference>
<dbReference type="RefSeq" id="NP_046423.1">
    <property type="nucleotide sequence ID" value="NC_001880.1"/>
</dbReference>
<dbReference type="SMR" id="O66423"/>
<dbReference type="EnsemblBacteria" id="AAC07975">
    <property type="protein sequence ID" value="AAC07975"/>
    <property type="gene ID" value="aq_aa34"/>
</dbReference>
<dbReference type="KEGG" id="aae:aq_aa34"/>
<dbReference type="HOGENOM" id="CLU_876169_0_0_0"/>
<dbReference type="InParanoid" id="O66423"/>
<dbReference type="Proteomes" id="UP000000798">
    <property type="component" value="Plasmid ece1"/>
</dbReference>
<accession>O66423</accession>
<comment type="similarity">
    <text evidence="1">To A.aeolicus AA07 and AA11.</text>
</comment>
<keyword id="KW-0614">Plasmid</keyword>
<keyword id="KW-1185">Reference proteome</keyword>
<gene>
    <name type="ordered locus">aq_aa34</name>
</gene>
<evidence type="ECO:0000305" key="1"/>
<organism>
    <name type="scientific">Aquifex aeolicus (strain VF5)</name>
    <dbReference type="NCBI Taxonomy" id="224324"/>
    <lineage>
        <taxon>Bacteria</taxon>
        <taxon>Pseudomonadati</taxon>
        <taxon>Aquificota</taxon>
        <taxon>Aquificia</taxon>
        <taxon>Aquificales</taxon>
        <taxon>Aquificaceae</taxon>
        <taxon>Aquifex</taxon>
    </lineage>
</organism>
<geneLocation type="plasmid">
    <name>ece1</name>
</geneLocation>
<proteinExistence type="predicted"/>
<name>YZ34_AQUAE</name>